<reference key="1">
    <citation type="journal article" date="1993" name="Nucleic Acids Res.">
        <title>Analysis of the Escherichia coli genome. IV. DNA sequence of the region from 89.2 to 92.8 minutes.</title>
        <authorList>
            <person name="Blattner F.R."/>
            <person name="Burland V.D."/>
            <person name="Plunkett G. III"/>
            <person name="Sofia H.J."/>
            <person name="Daniels D.L."/>
        </authorList>
    </citation>
    <scope>NUCLEOTIDE SEQUENCE [LARGE SCALE GENOMIC DNA]</scope>
    <source>
        <strain>K12 / MG1655 / ATCC 47076</strain>
    </source>
</reference>
<reference key="2">
    <citation type="journal article" date="1997" name="Science">
        <title>The complete genome sequence of Escherichia coli K-12.</title>
        <authorList>
            <person name="Blattner F.R."/>
            <person name="Plunkett G. III"/>
            <person name="Bloch C.A."/>
            <person name="Perna N.T."/>
            <person name="Burland V."/>
            <person name="Riley M."/>
            <person name="Collado-Vides J."/>
            <person name="Glasner J.D."/>
            <person name="Rode C.K."/>
            <person name="Mayhew G.F."/>
            <person name="Gregor J."/>
            <person name="Davis N.W."/>
            <person name="Kirkpatrick H.A."/>
            <person name="Goeden M.A."/>
            <person name="Rose D.J."/>
            <person name="Mau B."/>
            <person name="Shao Y."/>
        </authorList>
    </citation>
    <scope>NUCLEOTIDE SEQUENCE [LARGE SCALE GENOMIC DNA]</scope>
    <source>
        <strain>K12 / MG1655 / ATCC 47076</strain>
    </source>
</reference>
<reference key="3">
    <citation type="journal article" date="2006" name="Mol. Syst. Biol.">
        <title>Highly accurate genome sequences of Escherichia coli K-12 strains MG1655 and W3110.</title>
        <authorList>
            <person name="Hayashi K."/>
            <person name="Morooka N."/>
            <person name="Yamamoto Y."/>
            <person name="Fujita K."/>
            <person name="Isono K."/>
            <person name="Choi S."/>
            <person name="Ohtsubo E."/>
            <person name="Baba T."/>
            <person name="Wanner B.L."/>
            <person name="Mori H."/>
            <person name="Horiuchi T."/>
        </authorList>
    </citation>
    <scope>NUCLEOTIDE SEQUENCE [LARGE SCALE GENOMIC DNA]</scope>
    <source>
        <strain>K12 / W3110 / ATCC 27325 / DSM 5911</strain>
    </source>
</reference>
<reference key="4">
    <citation type="journal article" date="1995" name="Microbiology">
        <title>Novel phosphotransferase system genes revealed by bacterial genome analysis -- a gene cluster encoding a unique Enzyme I and the proteins of a fructose-like permease system.</title>
        <authorList>
            <person name="Reizer J."/>
            <person name="Reizer A."/>
            <person name="Saier M.H. Jr."/>
        </authorList>
    </citation>
    <scope>FUNCTION</scope>
    <scope>DISCUSSION OF SEQUENCE</scope>
</reference>
<reference key="5">
    <citation type="submission" date="2014-06" db="PDB data bank">
        <title>High-accuracy protein modeling and its application to molecular replacement of crystallographic phasing.</title>
        <authorList>
            <person name="Kim M.S."/>
            <person name="Shin D.H."/>
            <person name="Lee J."/>
            <person name="Joo K."/>
            <person name="Park J."/>
            <person name="Lee D."/>
            <person name="Berry E.A."/>
            <person name="Jhon G.-J."/>
        </authorList>
    </citation>
    <scope>X-RAY CRYSTALLOGRAPHY (2.29 ANGSTROMS)</scope>
</reference>
<proteinExistence type="evidence at protein level"/>
<gene>
    <name type="primary">frwD</name>
    <name type="synonym">yijN</name>
    <name type="ordered locus">b3953</name>
    <name type="ordered locus">JW3925</name>
</gene>
<organism>
    <name type="scientific">Escherichia coli (strain K12)</name>
    <dbReference type="NCBI Taxonomy" id="83333"/>
    <lineage>
        <taxon>Bacteria</taxon>
        <taxon>Pseudomonadati</taxon>
        <taxon>Pseudomonadota</taxon>
        <taxon>Gammaproteobacteria</taxon>
        <taxon>Enterobacterales</taxon>
        <taxon>Enterobacteriaceae</taxon>
        <taxon>Escherichia</taxon>
    </lineage>
</organism>
<comment type="function">
    <text evidence="1 4">The phosphoenolpyruvate-dependent sugar phosphotransferase system (sugar PTS), a major carbohydrate active transport system, catalyzes the phosphorylation of incoming sugar substrates concomitantly with their translocation across the cell membrane.</text>
</comment>
<comment type="catalytic activity">
    <reaction evidence="1">
        <text>D-fructose(out) + N(pros)-phospho-L-histidyl-[protein] = D-fructose 1-phosphate(in) + L-histidyl-[protein]</text>
        <dbReference type="Rhea" id="RHEA:49252"/>
        <dbReference type="Rhea" id="RHEA-COMP:9745"/>
        <dbReference type="Rhea" id="RHEA-COMP:9746"/>
        <dbReference type="ChEBI" id="CHEBI:29979"/>
        <dbReference type="ChEBI" id="CHEBI:37721"/>
        <dbReference type="ChEBI" id="CHEBI:58674"/>
        <dbReference type="ChEBI" id="CHEBI:64837"/>
        <dbReference type="EC" id="2.7.1.202"/>
    </reaction>
</comment>
<comment type="subcellular location">
    <subcellularLocation>
        <location evidence="3">Cytoplasm</location>
    </subcellularLocation>
</comment>
<comment type="domain">
    <text evidence="2">The PTS EIIB type-2 domain is phosphorylated by phospho-EIIA on a cysteinyl residue. Then, it transfers the phosphoryl group to the sugar substrate concomitantly with the sugar uptake processed by the PTS EIIC type-2 domain.</text>
</comment>
<accession>P32676</accession>
<accession>Q2M8P8</accession>
<sequence>MAYLVAVTACVSGVAHTYMAAERLEKLCLLEKWGVSIETQGALGTENRLADEDIRRADVALLITDIELAGAERFEHCRYVQCSIYAFLREPQRVMSAVRKVLSAPQQTHLILE</sequence>
<dbReference type="EC" id="2.7.1.202" evidence="1"/>
<dbReference type="EMBL" id="U00006">
    <property type="protein sequence ID" value="AAC43059.1"/>
    <property type="molecule type" value="Genomic_DNA"/>
</dbReference>
<dbReference type="EMBL" id="U00096">
    <property type="protein sequence ID" value="AAC76935.1"/>
    <property type="molecule type" value="Genomic_DNA"/>
</dbReference>
<dbReference type="EMBL" id="AP009048">
    <property type="protein sequence ID" value="BAE77358.1"/>
    <property type="molecule type" value="Genomic_DNA"/>
</dbReference>
<dbReference type="PIR" id="D65202">
    <property type="entry name" value="D65202"/>
</dbReference>
<dbReference type="RefSeq" id="NP_418388.1">
    <property type="nucleotide sequence ID" value="NC_000913.3"/>
</dbReference>
<dbReference type="RefSeq" id="WP_000323846.1">
    <property type="nucleotide sequence ID" value="NZ_LN832404.1"/>
</dbReference>
<dbReference type="PDB" id="4TN5">
    <property type="method" value="X-ray"/>
    <property type="resolution" value="2.29 A"/>
    <property type="chains" value="A/B=1-113"/>
</dbReference>
<dbReference type="PDBsum" id="4TN5"/>
<dbReference type="SMR" id="P32676"/>
<dbReference type="BioGRID" id="4263010">
    <property type="interactions" value="6"/>
</dbReference>
<dbReference type="BioGRID" id="852748">
    <property type="interactions" value="2"/>
</dbReference>
<dbReference type="ComplexPortal" id="CPX-5994">
    <property type="entry name" value="Frw fuctose-like enzyme II complex"/>
</dbReference>
<dbReference type="FunCoup" id="P32676">
    <property type="interactions" value="111"/>
</dbReference>
<dbReference type="IntAct" id="P32676">
    <property type="interactions" value="2"/>
</dbReference>
<dbReference type="STRING" id="511145.b3953"/>
<dbReference type="TCDB" id="4.A.2.1.10">
    <property type="family name" value="the pts fructose-mannitol (fru) family"/>
</dbReference>
<dbReference type="PaxDb" id="511145-b3953"/>
<dbReference type="EnsemblBacteria" id="AAC76935">
    <property type="protein sequence ID" value="AAC76935"/>
    <property type="gene ID" value="b3953"/>
</dbReference>
<dbReference type="GeneID" id="948452"/>
<dbReference type="KEGG" id="ecj:JW3925"/>
<dbReference type="KEGG" id="eco:b3953"/>
<dbReference type="KEGG" id="ecoc:C3026_21360"/>
<dbReference type="PATRIC" id="fig|1411691.4.peg.2752"/>
<dbReference type="EchoBASE" id="EB1856"/>
<dbReference type="eggNOG" id="COG1445">
    <property type="taxonomic scope" value="Bacteria"/>
</dbReference>
<dbReference type="HOGENOM" id="CLU_013155_2_2_6"/>
<dbReference type="InParanoid" id="P32676"/>
<dbReference type="OMA" id="CISGVAH"/>
<dbReference type="OrthoDB" id="9782569at2"/>
<dbReference type="PhylomeDB" id="P32676"/>
<dbReference type="BioCyc" id="EcoCyc:EG11912-MONOMER"/>
<dbReference type="EvolutionaryTrace" id="P32676"/>
<dbReference type="PRO" id="PR:P32676"/>
<dbReference type="Proteomes" id="UP000000625">
    <property type="component" value="Chromosome"/>
</dbReference>
<dbReference type="GO" id="GO:0005737">
    <property type="term" value="C:cytoplasm"/>
    <property type="evidence" value="ECO:0007669"/>
    <property type="project" value="UniProtKB-SubCell"/>
</dbReference>
<dbReference type="GO" id="GO:1902495">
    <property type="term" value="C:transmembrane transporter complex"/>
    <property type="evidence" value="ECO:0000303"/>
    <property type="project" value="ComplexPortal"/>
</dbReference>
<dbReference type="GO" id="GO:0016301">
    <property type="term" value="F:kinase activity"/>
    <property type="evidence" value="ECO:0007669"/>
    <property type="project" value="UniProtKB-KW"/>
</dbReference>
<dbReference type="GO" id="GO:0022877">
    <property type="term" value="F:protein-N(PI)-phosphohistidine-fructose phosphotransferase system transporter activity"/>
    <property type="evidence" value="ECO:0007669"/>
    <property type="project" value="InterPro"/>
</dbReference>
<dbReference type="GO" id="GO:0090582">
    <property type="term" value="F:protein-phosphocysteine-D-fructose-phosphotransferase system transporter activity"/>
    <property type="evidence" value="ECO:0000250"/>
    <property type="project" value="UniProtKB"/>
</dbReference>
<dbReference type="GO" id="GO:1990539">
    <property type="term" value="P:fructose import across plasma membrane"/>
    <property type="evidence" value="ECO:0000303"/>
    <property type="project" value="ComplexPortal"/>
</dbReference>
<dbReference type="GO" id="GO:0009401">
    <property type="term" value="P:phosphoenolpyruvate-dependent sugar phosphotransferase system"/>
    <property type="evidence" value="ECO:0000250"/>
    <property type="project" value="UniProtKB"/>
</dbReference>
<dbReference type="CDD" id="cd05569">
    <property type="entry name" value="PTS_IIB_fructose"/>
    <property type="match status" value="1"/>
</dbReference>
<dbReference type="FunFam" id="3.40.50.2300:FF:000094">
    <property type="entry name" value="PTS system fructose-like IIB component 2"/>
    <property type="match status" value="1"/>
</dbReference>
<dbReference type="Gene3D" id="3.40.50.2300">
    <property type="match status" value="1"/>
</dbReference>
<dbReference type="InterPro" id="IPR050864">
    <property type="entry name" value="Bacterial_PTS_Sugar_Transport"/>
</dbReference>
<dbReference type="InterPro" id="IPR036095">
    <property type="entry name" value="PTS_EIIB-like_sf"/>
</dbReference>
<dbReference type="InterPro" id="IPR013011">
    <property type="entry name" value="PTS_EIIB_2"/>
</dbReference>
<dbReference type="InterPro" id="IPR003501">
    <property type="entry name" value="PTS_EIIB_2/3"/>
</dbReference>
<dbReference type="InterPro" id="IPR003353">
    <property type="entry name" value="PTS_IIB_fruc"/>
</dbReference>
<dbReference type="NCBIfam" id="TIGR00829">
    <property type="entry name" value="FRU"/>
    <property type="match status" value="1"/>
</dbReference>
<dbReference type="NCBIfam" id="NF007747">
    <property type="entry name" value="PRK10427.1"/>
    <property type="match status" value="1"/>
</dbReference>
<dbReference type="PANTHER" id="PTHR30505">
    <property type="entry name" value="FRUCTOSE-LIKE PERMEASE"/>
    <property type="match status" value="1"/>
</dbReference>
<dbReference type="PANTHER" id="PTHR30505:SF0">
    <property type="entry name" value="FRUCTOSE-LIKE PTS SYSTEM EIIBC COMPONENT-RELATED"/>
    <property type="match status" value="1"/>
</dbReference>
<dbReference type="Pfam" id="PF02302">
    <property type="entry name" value="PTS_IIB"/>
    <property type="match status" value="1"/>
</dbReference>
<dbReference type="SUPFAM" id="SSF52794">
    <property type="entry name" value="PTS system IIB component-like"/>
    <property type="match status" value="1"/>
</dbReference>
<dbReference type="PROSITE" id="PS51099">
    <property type="entry name" value="PTS_EIIB_TYPE_2"/>
    <property type="match status" value="1"/>
</dbReference>
<name>PTFB3_ECOLI</name>
<feature type="chain" id="PRO_0000186505" description="PTS system fructose-like EIIB component 3">
    <location>
        <begin position="1"/>
        <end position="113"/>
    </location>
</feature>
<feature type="domain" description="PTS EIIB type-2" evidence="2">
    <location>
        <begin position="1"/>
        <end position="100"/>
    </location>
</feature>
<feature type="active site" description="Phosphocysteine intermediate" evidence="1 3">
    <location>
        <position position="10"/>
    </location>
</feature>
<feature type="modified residue" description="Phosphocysteine; by EIIA" evidence="2">
    <location>
        <position position="10"/>
    </location>
</feature>
<feature type="strand" evidence="5">
    <location>
        <begin position="3"/>
        <end position="9"/>
    </location>
</feature>
<feature type="turn" evidence="5">
    <location>
        <begin position="13"/>
        <end position="17"/>
    </location>
</feature>
<feature type="helix" evidence="5">
    <location>
        <begin position="18"/>
        <end position="30"/>
    </location>
</feature>
<feature type="strand" evidence="5">
    <location>
        <begin position="34"/>
        <end position="41"/>
    </location>
</feature>
<feature type="strand" evidence="5">
    <location>
        <begin position="44"/>
        <end position="47"/>
    </location>
</feature>
<feature type="helix" evidence="5">
    <location>
        <begin position="51"/>
        <end position="56"/>
    </location>
</feature>
<feature type="strand" evidence="5">
    <location>
        <begin position="58"/>
        <end position="66"/>
    </location>
</feature>
<feature type="helix" evidence="5">
    <location>
        <begin position="71"/>
        <end position="74"/>
    </location>
</feature>
<feature type="strand" evidence="5">
    <location>
        <begin position="79"/>
        <end position="82"/>
    </location>
</feature>
<feature type="helix" evidence="5">
    <location>
        <begin position="84"/>
        <end position="89"/>
    </location>
</feature>
<feature type="helix" evidence="5">
    <location>
        <begin position="92"/>
        <end position="103"/>
    </location>
</feature>
<feature type="strand" evidence="5">
    <location>
        <begin position="104"/>
        <end position="106"/>
    </location>
</feature>
<feature type="strand" evidence="5">
    <location>
        <begin position="108"/>
        <end position="111"/>
    </location>
</feature>
<protein>
    <recommendedName>
        <fullName evidence="1">PTS system fructose-like EIIB component 3</fullName>
        <ecNumber evidence="1">2.7.1.202</ecNumber>
    </recommendedName>
    <alternativeName>
        <fullName evidence="1">Fructose-like phosphotransferase enzyme IIB component 3</fullName>
    </alternativeName>
</protein>
<keyword id="KW-0002">3D-structure</keyword>
<keyword id="KW-0963">Cytoplasm</keyword>
<keyword id="KW-0418">Kinase</keyword>
<keyword id="KW-0597">Phosphoprotein</keyword>
<keyword id="KW-0598">Phosphotransferase system</keyword>
<keyword id="KW-1185">Reference proteome</keyword>
<keyword id="KW-0762">Sugar transport</keyword>
<keyword id="KW-0808">Transferase</keyword>
<keyword id="KW-0813">Transport</keyword>
<evidence type="ECO:0000250" key="1">
    <source>
        <dbReference type="UniProtKB" id="P20966"/>
    </source>
</evidence>
<evidence type="ECO:0000255" key="2">
    <source>
        <dbReference type="PROSITE-ProRule" id="PRU00422"/>
    </source>
</evidence>
<evidence type="ECO:0000305" key="3"/>
<evidence type="ECO:0000305" key="4">
    <source>
    </source>
</evidence>
<evidence type="ECO:0007829" key="5">
    <source>
        <dbReference type="PDB" id="4TN5"/>
    </source>
</evidence>